<sequence length="548" mass="61732">MESQRNLILIGLLFVSFLLWQQWESDKAPKPAPTTVAQTEHFVPEAGQTGDIPQVSEQANANTARKLITVSSDVLKLTLDTQGGDIVSADLLAHKLEEGKDQPFVLLTSQPEHLYVAQSGLVGRNGPDSQAQGRPTYEAAQTSYQLADGQDQVVVPMTWTDSKGVVFTKEFVLKRGDYAVGVDYKIDNKSAEPVQVQFYGQLKQTVTTPKDQQGHAMVASAYRGGAFSSEDTRYKKYTFDEMKDADLNKTTKGGWVAMLQHYFVSAWAPNADDTNSFYSRVIPGKDQAIIGYKAPLVDVAAGQQAEVTSKLWVGPKLQDQMAKVANHLDLTVDYGWLWFIAQPLHWLLTVFHGFVQNWGVAIIMLTLLVRGIMFPLTKAQYTSMAKMRMLQPKLAALRERFGDDRQKMSQGMMELYKKEKVNPLGGCLPILVQMPIFIALYWALMESVELRHAPFALWITDLSVKDPFFVLPILMGASMWYLQKMSPTTITDPMQQKVMQFMPIIFTFMFLWFPAGLTLYWLVSNVISITQQTIIYRQLEKKGLHTRS</sequence>
<name>YIDC_AERHH</name>
<evidence type="ECO:0000255" key="1">
    <source>
        <dbReference type="HAMAP-Rule" id="MF_01810"/>
    </source>
</evidence>
<accession>A0KQZ7</accession>
<organism>
    <name type="scientific">Aeromonas hydrophila subsp. hydrophila (strain ATCC 7966 / DSM 30187 / BCRC 13018 / CCUG 14551 / JCM 1027 / KCTC 2358 / NCIMB 9240 / NCTC 8049)</name>
    <dbReference type="NCBI Taxonomy" id="380703"/>
    <lineage>
        <taxon>Bacteria</taxon>
        <taxon>Pseudomonadati</taxon>
        <taxon>Pseudomonadota</taxon>
        <taxon>Gammaproteobacteria</taxon>
        <taxon>Aeromonadales</taxon>
        <taxon>Aeromonadaceae</taxon>
        <taxon>Aeromonas</taxon>
    </lineage>
</organism>
<protein>
    <recommendedName>
        <fullName evidence="1">Membrane protein insertase YidC</fullName>
    </recommendedName>
    <alternativeName>
        <fullName evidence="1">Foldase YidC</fullName>
    </alternativeName>
    <alternativeName>
        <fullName evidence="1">Membrane integrase YidC</fullName>
    </alternativeName>
    <alternativeName>
        <fullName evidence="1">Membrane protein YidC</fullName>
    </alternativeName>
</protein>
<feature type="chain" id="PRO_1000070051" description="Membrane protein insertase YidC">
    <location>
        <begin position="1"/>
        <end position="548"/>
    </location>
</feature>
<feature type="transmembrane region" description="Helical" evidence="1">
    <location>
        <begin position="6"/>
        <end position="26"/>
    </location>
</feature>
<feature type="transmembrane region" description="Helical" evidence="1">
    <location>
        <begin position="357"/>
        <end position="377"/>
    </location>
</feature>
<feature type="transmembrane region" description="Helical" evidence="1">
    <location>
        <begin position="424"/>
        <end position="444"/>
    </location>
</feature>
<feature type="transmembrane region" description="Helical" evidence="1">
    <location>
        <begin position="455"/>
        <end position="475"/>
    </location>
</feature>
<feature type="transmembrane region" description="Helical" evidence="1">
    <location>
        <begin position="503"/>
        <end position="523"/>
    </location>
</feature>
<gene>
    <name evidence="1" type="primary">yidC</name>
    <name type="ordered locus">AHA_4281</name>
</gene>
<reference key="1">
    <citation type="journal article" date="2006" name="J. Bacteriol.">
        <title>Genome sequence of Aeromonas hydrophila ATCC 7966T: jack of all trades.</title>
        <authorList>
            <person name="Seshadri R."/>
            <person name="Joseph S.W."/>
            <person name="Chopra A.K."/>
            <person name="Sha J."/>
            <person name="Shaw J."/>
            <person name="Graf J."/>
            <person name="Haft D.H."/>
            <person name="Wu M."/>
            <person name="Ren Q."/>
            <person name="Rosovitz M.J."/>
            <person name="Madupu R."/>
            <person name="Tallon L."/>
            <person name="Kim M."/>
            <person name="Jin S."/>
            <person name="Vuong H."/>
            <person name="Stine O.C."/>
            <person name="Ali A."/>
            <person name="Horneman A.J."/>
            <person name="Heidelberg J.F."/>
        </authorList>
    </citation>
    <scope>NUCLEOTIDE SEQUENCE [LARGE SCALE GENOMIC DNA]</scope>
    <source>
        <strain>ATCC 7966 / DSM 30187 / BCRC 13018 / CCUG 14551 / JCM 1027 / KCTC 2358 / NCIMB 9240 / NCTC 8049</strain>
    </source>
</reference>
<dbReference type="EMBL" id="CP000462">
    <property type="protein sequence ID" value="ABK35833.1"/>
    <property type="molecule type" value="Genomic_DNA"/>
</dbReference>
<dbReference type="RefSeq" id="WP_011707925.1">
    <property type="nucleotide sequence ID" value="NC_008570.1"/>
</dbReference>
<dbReference type="RefSeq" id="YP_858698.1">
    <property type="nucleotide sequence ID" value="NC_008570.1"/>
</dbReference>
<dbReference type="SMR" id="A0KQZ7"/>
<dbReference type="STRING" id="380703.AHA_4281"/>
<dbReference type="EnsemblBacteria" id="ABK35833">
    <property type="protein sequence ID" value="ABK35833"/>
    <property type="gene ID" value="AHA_4281"/>
</dbReference>
<dbReference type="GeneID" id="4488804"/>
<dbReference type="KEGG" id="aha:AHA_4281"/>
<dbReference type="PATRIC" id="fig|380703.7.peg.4230"/>
<dbReference type="eggNOG" id="COG0706">
    <property type="taxonomic scope" value="Bacteria"/>
</dbReference>
<dbReference type="HOGENOM" id="CLU_016535_3_0_6"/>
<dbReference type="OrthoDB" id="9780552at2"/>
<dbReference type="Proteomes" id="UP000000756">
    <property type="component" value="Chromosome"/>
</dbReference>
<dbReference type="GO" id="GO:0005886">
    <property type="term" value="C:plasma membrane"/>
    <property type="evidence" value="ECO:0007669"/>
    <property type="project" value="UniProtKB-SubCell"/>
</dbReference>
<dbReference type="GO" id="GO:0032977">
    <property type="term" value="F:membrane insertase activity"/>
    <property type="evidence" value="ECO:0007669"/>
    <property type="project" value="InterPro"/>
</dbReference>
<dbReference type="GO" id="GO:0051205">
    <property type="term" value="P:protein insertion into membrane"/>
    <property type="evidence" value="ECO:0007669"/>
    <property type="project" value="TreeGrafter"/>
</dbReference>
<dbReference type="GO" id="GO:0015031">
    <property type="term" value="P:protein transport"/>
    <property type="evidence" value="ECO:0007669"/>
    <property type="project" value="UniProtKB-KW"/>
</dbReference>
<dbReference type="CDD" id="cd20070">
    <property type="entry name" value="5TM_YidC_Alb3"/>
    <property type="match status" value="1"/>
</dbReference>
<dbReference type="CDD" id="cd19961">
    <property type="entry name" value="EcYidC-like_peri"/>
    <property type="match status" value="1"/>
</dbReference>
<dbReference type="Gene3D" id="2.70.98.90">
    <property type="match status" value="1"/>
</dbReference>
<dbReference type="HAMAP" id="MF_01810">
    <property type="entry name" value="YidC_type1"/>
    <property type="match status" value="1"/>
</dbReference>
<dbReference type="InterPro" id="IPR019998">
    <property type="entry name" value="Membr_insert_YidC"/>
</dbReference>
<dbReference type="InterPro" id="IPR028053">
    <property type="entry name" value="Membr_insert_YidC_N"/>
</dbReference>
<dbReference type="InterPro" id="IPR001708">
    <property type="entry name" value="YidC/ALB3/OXA1/COX18"/>
</dbReference>
<dbReference type="InterPro" id="IPR028055">
    <property type="entry name" value="YidC/Oxa/ALB_C"/>
</dbReference>
<dbReference type="InterPro" id="IPR047196">
    <property type="entry name" value="YidC_ALB_C"/>
</dbReference>
<dbReference type="InterPro" id="IPR038221">
    <property type="entry name" value="YidC_periplasmic_sf"/>
</dbReference>
<dbReference type="NCBIfam" id="NF002351">
    <property type="entry name" value="PRK01318.1-1"/>
    <property type="match status" value="1"/>
</dbReference>
<dbReference type="NCBIfam" id="NF002352">
    <property type="entry name" value="PRK01318.1-3"/>
    <property type="match status" value="1"/>
</dbReference>
<dbReference type="NCBIfam" id="NF002353">
    <property type="entry name" value="PRK01318.1-4"/>
    <property type="match status" value="1"/>
</dbReference>
<dbReference type="NCBIfam" id="TIGR03593">
    <property type="entry name" value="yidC_nterm"/>
    <property type="match status" value="1"/>
</dbReference>
<dbReference type="NCBIfam" id="TIGR03592">
    <property type="entry name" value="yidC_oxa1_cterm"/>
    <property type="match status" value="1"/>
</dbReference>
<dbReference type="PANTHER" id="PTHR12428:SF65">
    <property type="entry name" value="CYTOCHROME C OXIDASE ASSEMBLY PROTEIN COX18, MITOCHONDRIAL"/>
    <property type="match status" value="1"/>
</dbReference>
<dbReference type="PANTHER" id="PTHR12428">
    <property type="entry name" value="OXA1"/>
    <property type="match status" value="1"/>
</dbReference>
<dbReference type="Pfam" id="PF02096">
    <property type="entry name" value="60KD_IMP"/>
    <property type="match status" value="1"/>
</dbReference>
<dbReference type="Pfam" id="PF14849">
    <property type="entry name" value="YidC_periplas"/>
    <property type="match status" value="1"/>
</dbReference>
<dbReference type="PRINTS" id="PR00701">
    <property type="entry name" value="60KDINNERMP"/>
</dbReference>
<dbReference type="PRINTS" id="PR01900">
    <property type="entry name" value="YIDCPROTEIN"/>
</dbReference>
<keyword id="KW-0997">Cell inner membrane</keyword>
<keyword id="KW-1003">Cell membrane</keyword>
<keyword id="KW-0143">Chaperone</keyword>
<keyword id="KW-0472">Membrane</keyword>
<keyword id="KW-0653">Protein transport</keyword>
<keyword id="KW-1185">Reference proteome</keyword>
<keyword id="KW-0812">Transmembrane</keyword>
<keyword id="KW-1133">Transmembrane helix</keyword>
<keyword id="KW-0813">Transport</keyword>
<proteinExistence type="inferred from homology"/>
<comment type="function">
    <text evidence="1">Required for the insertion and/or proper folding and/or complex formation of integral membrane proteins into the membrane. Involved in integration of membrane proteins that insert both dependently and independently of the Sec translocase complex, as well as at least some lipoproteins. Aids folding of multispanning membrane proteins.</text>
</comment>
<comment type="subunit">
    <text evidence="1">Interacts with the Sec translocase complex via SecD. Specifically interacts with transmembrane segments of nascent integral membrane proteins during membrane integration.</text>
</comment>
<comment type="subcellular location">
    <subcellularLocation>
        <location evidence="1">Cell inner membrane</location>
        <topology evidence="1">Multi-pass membrane protein</topology>
    </subcellularLocation>
</comment>
<comment type="similarity">
    <text evidence="1">Belongs to the OXA1/ALB3/YidC family. Type 1 subfamily.</text>
</comment>